<accession>A9BNB4</accession>
<evidence type="ECO:0000255" key="1">
    <source>
        <dbReference type="HAMAP-Rule" id="MF_01394"/>
    </source>
</evidence>
<organism>
    <name type="scientific">Delftia acidovorans (strain DSM 14801 / SPH-1)</name>
    <dbReference type="NCBI Taxonomy" id="398578"/>
    <lineage>
        <taxon>Bacteria</taxon>
        <taxon>Pseudomonadati</taxon>
        <taxon>Pseudomonadota</taxon>
        <taxon>Betaproteobacteria</taxon>
        <taxon>Burkholderiales</taxon>
        <taxon>Comamonadaceae</taxon>
        <taxon>Delftia</taxon>
    </lineage>
</organism>
<protein>
    <recommendedName>
        <fullName evidence="1">NADH-quinone oxidoreductase subunit A</fullName>
        <ecNumber evidence="1">7.1.1.-</ecNumber>
    </recommendedName>
    <alternativeName>
        <fullName evidence="1">NADH dehydrogenase I subunit A</fullName>
    </alternativeName>
    <alternativeName>
        <fullName evidence="1">NDH-1 subunit A</fullName>
    </alternativeName>
    <alternativeName>
        <fullName evidence="1">NUO1</fullName>
    </alternativeName>
</protein>
<feature type="chain" id="PRO_0000362671" description="NADH-quinone oxidoreductase subunit A">
    <location>
        <begin position="1"/>
        <end position="119"/>
    </location>
</feature>
<feature type="transmembrane region" description="Helical" evidence="1">
    <location>
        <begin position="9"/>
        <end position="29"/>
    </location>
</feature>
<feature type="transmembrane region" description="Helical" evidence="1">
    <location>
        <begin position="63"/>
        <end position="83"/>
    </location>
</feature>
<feature type="transmembrane region" description="Helical" evidence="1">
    <location>
        <begin position="88"/>
        <end position="108"/>
    </location>
</feature>
<sequence length="119" mass="13252">MNIDQYLPVLLFILVGMGVGVVPLVLGYVLGPNRPDAAKNSPYECGFEAFEDARMKFDVRYYLVAILFILFDLEIAFLLPWAVALRDVGGAGFAAVLIFLTVLVVGFVYEWKKGALDWD</sequence>
<gene>
    <name evidence="1" type="primary">nuoA</name>
    <name type="ordered locus">Daci_5180</name>
</gene>
<name>NUOA_DELAS</name>
<proteinExistence type="inferred from homology"/>
<dbReference type="EC" id="7.1.1.-" evidence="1"/>
<dbReference type="EMBL" id="CP000884">
    <property type="protein sequence ID" value="ABX37809.1"/>
    <property type="molecule type" value="Genomic_DNA"/>
</dbReference>
<dbReference type="RefSeq" id="WP_012206979.1">
    <property type="nucleotide sequence ID" value="NC_010002.1"/>
</dbReference>
<dbReference type="SMR" id="A9BNB4"/>
<dbReference type="STRING" id="398578.Daci_5180"/>
<dbReference type="KEGG" id="dac:Daci_5180"/>
<dbReference type="eggNOG" id="COG0838">
    <property type="taxonomic scope" value="Bacteria"/>
</dbReference>
<dbReference type="HOGENOM" id="CLU_119549_3_1_4"/>
<dbReference type="Proteomes" id="UP000000784">
    <property type="component" value="Chromosome"/>
</dbReference>
<dbReference type="GO" id="GO:0030964">
    <property type="term" value="C:NADH dehydrogenase complex"/>
    <property type="evidence" value="ECO:0007669"/>
    <property type="project" value="TreeGrafter"/>
</dbReference>
<dbReference type="GO" id="GO:0005886">
    <property type="term" value="C:plasma membrane"/>
    <property type="evidence" value="ECO:0007669"/>
    <property type="project" value="UniProtKB-SubCell"/>
</dbReference>
<dbReference type="GO" id="GO:0008137">
    <property type="term" value="F:NADH dehydrogenase (ubiquinone) activity"/>
    <property type="evidence" value="ECO:0007669"/>
    <property type="project" value="InterPro"/>
</dbReference>
<dbReference type="GO" id="GO:0050136">
    <property type="term" value="F:NADH:ubiquinone reductase (non-electrogenic) activity"/>
    <property type="evidence" value="ECO:0007669"/>
    <property type="project" value="UniProtKB-UniRule"/>
</dbReference>
<dbReference type="GO" id="GO:0048038">
    <property type="term" value="F:quinone binding"/>
    <property type="evidence" value="ECO:0007669"/>
    <property type="project" value="UniProtKB-KW"/>
</dbReference>
<dbReference type="FunFam" id="1.20.58.1610:FF:000004">
    <property type="entry name" value="NADH-quinone oxidoreductase subunit A"/>
    <property type="match status" value="1"/>
</dbReference>
<dbReference type="Gene3D" id="1.20.58.1610">
    <property type="entry name" value="NADH:ubiquinone/plastoquinone oxidoreductase, chain 3"/>
    <property type="match status" value="1"/>
</dbReference>
<dbReference type="HAMAP" id="MF_01394">
    <property type="entry name" value="NDH1_NuoA"/>
    <property type="match status" value="1"/>
</dbReference>
<dbReference type="InterPro" id="IPR023043">
    <property type="entry name" value="NAD(P)H_OxRDtase_bac/plastid"/>
</dbReference>
<dbReference type="InterPro" id="IPR000440">
    <property type="entry name" value="NADH_UbQ/plastoQ_OxRdtase_su3"/>
</dbReference>
<dbReference type="InterPro" id="IPR038430">
    <property type="entry name" value="NDAH_ubi_oxred_su3_sf"/>
</dbReference>
<dbReference type="PANTHER" id="PTHR11058">
    <property type="entry name" value="NADH-UBIQUINONE OXIDOREDUCTASE CHAIN 3"/>
    <property type="match status" value="1"/>
</dbReference>
<dbReference type="PANTHER" id="PTHR11058:SF9">
    <property type="entry name" value="NADH-UBIQUINONE OXIDOREDUCTASE CHAIN 3"/>
    <property type="match status" value="1"/>
</dbReference>
<dbReference type="Pfam" id="PF00507">
    <property type="entry name" value="Oxidored_q4"/>
    <property type="match status" value="1"/>
</dbReference>
<reference key="1">
    <citation type="submission" date="2007-11" db="EMBL/GenBank/DDBJ databases">
        <title>Complete sequence of Delftia acidovorans DSM 14801 / SPH-1.</title>
        <authorList>
            <person name="Copeland A."/>
            <person name="Lucas S."/>
            <person name="Lapidus A."/>
            <person name="Barry K."/>
            <person name="Glavina del Rio T."/>
            <person name="Dalin E."/>
            <person name="Tice H."/>
            <person name="Pitluck S."/>
            <person name="Lowry S."/>
            <person name="Clum A."/>
            <person name="Schmutz J."/>
            <person name="Larimer F."/>
            <person name="Land M."/>
            <person name="Hauser L."/>
            <person name="Kyrpides N."/>
            <person name="Kim E."/>
            <person name="Schleheck D."/>
            <person name="Richardson P."/>
        </authorList>
    </citation>
    <scope>NUCLEOTIDE SEQUENCE [LARGE SCALE GENOMIC DNA]</scope>
    <source>
        <strain>DSM 14801 / SPH-1</strain>
    </source>
</reference>
<comment type="function">
    <text evidence="1">NDH-1 shuttles electrons from NADH, via FMN and iron-sulfur (Fe-S) centers, to quinones in the respiratory chain. The immediate electron acceptor for the enzyme in this species is believed to be ubiquinone. Couples the redox reaction to proton translocation (for every two electrons transferred, four hydrogen ions are translocated across the cytoplasmic membrane), and thus conserves the redox energy in a proton gradient.</text>
</comment>
<comment type="catalytic activity">
    <reaction evidence="1">
        <text>a quinone + NADH + 5 H(+)(in) = a quinol + NAD(+) + 4 H(+)(out)</text>
        <dbReference type="Rhea" id="RHEA:57888"/>
        <dbReference type="ChEBI" id="CHEBI:15378"/>
        <dbReference type="ChEBI" id="CHEBI:24646"/>
        <dbReference type="ChEBI" id="CHEBI:57540"/>
        <dbReference type="ChEBI" id="CHEBI:57945"/>
        <dbReference type="ChEBI" id="CHEBI:132124"/>
    </reaction>
</comment>
<comment type="subunit">
    <text evidence="1">NDH-1 is composed of 14 different subunits. Subunits NuoA, H, J, K, L, M, N constitute the membrane sector of the complex.</text>
</comment>
<comment type="subcellular location">
    <subcellularLocation>
        <location evidence="1">Cell inner membrane</location>
        <topology evidence="1">Multi-pass membrane protein</topology>
    </subcellularLocation>
</comment>
<comment type="similarity">
    <text evidence="1">Belongs to the complex I subunit 3 family.</text>
</comment>
<keyword id="KW-0997">Cell inner membrane</keyword>
<keyword id="KW-1003">Cell membrane</keyword>
<keyword id="KW-0472">Membrane</keyword>
<keyword id="KW-0520">NAD</keyword>
<keyword id="KW-0874">Quinone</keyword>
<keyword id="KW-1185">Reference proteome</keyword>
<keyword id="KW-1278">Translocase</keyword>
<keyword id="KW-0812">Transmembrane</keyword>
<keyword id="KW-1133">Transmembrane helix</keyword>
<keyword id="KW-0813">Transport</keyword>
<keyword id="KW-0830">Ubiquinone</keyword>